<sequence length="333" mass="34814">MAVRGANTLTSFSIQAILNKKEERGGLAAPEGRPAPGGTAASVAAAPAVCCWRLFGERDAGALGGAEDSLLASPAGTRTAAGRTAESPEGWDSDSALSEENESRRRCADARGASGAGLAGGSLSLGQPVCELAASKDLEEEAAGRSDSEMSASVSGDRSPRTEDDGVGPRGAHVSALCSGAGGGGGSGPAGVAEEEEEPAAPKPRKKRSRAAFSHAQVFELERRFNHQRYLSGPERADLAASLKLTETQVKIWFQNRRYKTKRRQMAADLLASAPAAKKVAVKVLVRDDQRQYLPGEVLRPPSLLPLQPSYYYPYYCLPGWALSTCAAAAGTQ</sequence>
<gene>
    <name type="primary">NKX3-2</name>
    <name type="synonym">BAPX1</name>
    <name type="synonym">NKX3B</name>
</gene>
<proteinExistence type="evidence at protein level"/>
<accession>P78367</accession>
<accession>Q2M2I7</accession>
<keyword id="KW-0238">DNA-binding</keyword>
<keyword id="KW-0242">Dwarfism</keyword>
<keyword id="KW-0371">Homeobox</keyword>
<keyword id="KW-0539">Nucleus</keyword>
<keyword id="KW-1267">Proteomics identification</keyword>
<keyword id="KW-1185">Reference proteome</keyword>
<keyword id="KW-0678">Repressor</keyword>
<keyword id="KW-0804">Transcription</keyword>
<keyword id="KW-0805">Transcription regulation</keyword>
<dbReference type="EMBL" id="AF005260">
    <property type="protein sequence ID" value="AAC39536.1"/>
    <property type="molecule type" value="Genomic_DNA"/>
</dbReference>
<dbReference type="EMBL" id="AF009801">
    <property type="protein sequence ID" value="AAB82783.1"/>
    <property type="molecule type" value="mRNA"/>
</dbReference>
<dbReference type="EMBL" id="AF009802">
    <property type="protein sequence ID" value="AAB82784.1"/>
    <property type="molecule type" value="Genomic_DNA"/>
</dbReference>
<dbReference type="EMBL" id="BC111966">
    <property type="protein sequence ID" value="AAI11967.1"/>
    <property type="molecule type" value="mRNA"/>
</dbReference>
<dbReference type="EMBL" id="U89845">
    <property type="protein sequence ID" value="AAB49696.1"/>
    <property type="molecule type" value="Genomic_DNA"/>
</dbReference>
<dbReference type="CCDS" id="CCDS3410.1"/>
<dbReference type="RefSeq" id="NP_001180.1">
    <property type="nucleotide sequence ID" value="NM_001189.4"/>
</dbReference>
<dbReference type="RefSeq" id="XP_047272005.1">
    <property type="nucleotide sequence ID" value="XM_047416049.1"/>
</dbReference>
<dbReference type="RefSeq" id="XP_047272006.1">
    <property type="nucleotide sequence ID" value="XM_047416050.1"/>
</dbReference>
<dbReference type="RefSeq" id="XP_054206634.1">
    <property type="nucleotide sequence ID" value="XM_054350659.1"/>
</dbReference>
<dbReference type="SMR" id="P78367"/>
<dbReference type="BioGRID" id="107055">
    <property type="interactions" value="9"/>
</dbReference>
<dbReference type="FunCoup" id="P78367">
    <property type="interactions" value="1188"/>
</dbReference>
<dbReference type="IntAct" id="P78367">
    <property type="interactions" value="1"/>
</dbReference>
<dbReference type="STRING" id="9606.ENSP00000371875"/>
<dbReference type="iPTMnet" id="P78367"/>
<dbReference type="PhosphoSitePlus" id="P78367"/>
<dbReference type="BioMuta" id="NKX3-2"/>
<dbReference type="DMDM" id="6016210"/>
<dbReference type="jPOST" id="P78367"/>
<dbReference type="MassIVE" id="P78367"/>
<dbReference type="PaxDb" id="9606-ENSP00000371875"/>
<dbReference type="PeptideAtlas" id="P78367"/>
<dbReference type="ProteomicsDB" id="57595"/>
<dbReference type="Antibodypedia" id="22925">
    <property type="antibodies" value="201 antibodies from 30 providers"/>
</dbReference>
<dbReference type="DNASU" id="579"/>
<dbReference type="Ensembl" id="ENST00000382438.6">
    <property type="protein sequence ID" value="ENSP00000371875.5"/>
    <property type="gene ID" value="ENSG00000109705.8"/>
</dbReference>
<dbReference type="GeneID" id="579"/>
<dbReference type="KEGG" id="hsa:579"/>
<dbReference type="MANE-Select" id="ENST00000382438.6">
    <property type="protein sequence ID" value="ENSP00000371875.5"/>
    <property type="RefSeq nucleotide sequence ID" value="NM_001189.4"/>
    <property type="RefSeq protein sequence ID" value="NP_001180.1"/>
</dbReference>
<dbReference type="UCSC" id="uc003gmx.3">
    <property type="organism name" value="human"/>
</dbReference>
<dbReference type="AGR" id="HGNC:951"/>
<dbReference type="CTD" id="579"/>
<dbReference type="DisGeNET" id="579"/>
<dbReference type="GeneCards" id="NKX3-2"/>
<dbReference type="HGNC" id="HGNC:951">
    <property type="gene designation" value="NKX3-2"/>
</dbReference>
<dbReference type="HPA" id="ENSG00000109705">
    <property type="expression patterns" value="Tissue enriched (intestine)"/>
</dbReference>
<dbReference type="MalaCards" id="NKX3-2"/>
<dbReference type="MIM" id="602183">
    <property type="type" value="gene"/>
</dbReference>
<dbReference type="MIM" id="613330">
    <property type="type" value="phenotype"/>
</dbReference>
<dbReference type="neXtProt" id="NX_P78367"/>
<dbReference type="OpenTargets" id="ENSG00000109705"/>
<dbReference type="Orphanet" id="228387">
    <property type="disease" value="Spondylo-megaepiphyseal-metaphyseal dysplasia"/>
</dbReference>
<dbReference type="PharmGKB" id="PA162397617"/>
<dbReference type="VEuPathDB" id="HostDB:ENSG00000109705"/>
<dbReference type="eggNOG" id="KOG0842">
    <property type="taxonomic scope" value="Eukaryota"/>
</dbReference>
<dbReference type="GeneTree" id="ENSGT00940000161843"/>
<dbReference type="HOGENOM" id="CLU_049543_2_0_1"/>
<dbReference type="InParanoid" id="P78367"/>
<dbReference type="OMA" id="RRCADVP"/>
<dbReference type="OrthoDB" id="6159439at2759"/>
<dbReference type="PAN-GO" id="P78367">
    <property type="GO annotations" value="5 GO annotations based on evolutionary models"/>
</dbReference>
<dbReference type="PhylomeDB" id="P78367"/>
<dbReference type="TreeFam" id="TF351204"/>
<dbReference type="PathwayCommons" id="P78367"/>
<dbReference type="Reactome" id="R-HSA-8939902">
    <property type="pathway name" value="Regulation of RUNX2 expression and activity"/>
</dbReference>
<dbReference type="SignaLink" id="P78367"/>
<dbReference type="BioGRID-ORCS" id="579">
    <property type="hits" value="8 hits in 1151 CRISPR screens"/>
</dbReference>
<dbReference type="GenomeRNAi" id="579"/>
<dbReference type="Pharos" id="P78367">
    <property type="development level" value="Tbio"/>
</dbReference>
<dbReference type="PRO" id="PR:P78367"/>
<dbReference type="Proteomes" id="UP000005640">
    <property type="component" value="Chromosome 4"/>
</dbReference>
<dbReference type="RNAct" id="P78367">
    <property type="molecule type" value="protein"/>
</dbReference>
<dbReference type="Bgee" id="ENSG00000109705">
    <property type="expression patterns" value="Expressed in tibia and 60 other cell types or tissues"/>
</dbReference>
<dbReference type="GO" id="GO:0000785">
    <property type="term" value="C:chromatin"/>
    <property type="evidence" value="ECO:0000247"/>
    <property type="project" value="NTNU_SB"/>
</dbReference>
<dbReference type="GO" id="GO:0005634">
    <property type="term" value="C:nucleus"/>
    <property type="evidence" value="ECO:0000318"/>
    <property type="project" value="GO_Central"/>
</dbReference>
<dbReference type="GO" id="GO:0000981">
    <property type="term" value="F:DNA-binding transcription factor activity, RNA polymerase II-specific"/>
    <property type="evidence" value="ECO:0000247"/>
    <property type="project" value="NTNU_SB"/>
</dbReference>
<dbReference type="GO" id="GO:0001227">
    <property type="term" value="F:DNA-binding transcription repressor activity, RNA polymerase II-specific"/>
    <property type="evidence" value="ECO:0007669"/>
    <property type="project" value="Ensembl"/>
</dbReference>
<dbReference type="GO" id="GO:0000978">
    <property type="term" value="F:RNA polymerase II cis-regulatory region sequence-specific DNA binding"/>
    <property type="evidence" value="ECO:0000318"/>
    <property type="project" value="GO_Central"/>
</dbReference>
<dbReference type="GO" id="GO:1990837">
    <property type="term" value="F:sequence-specific double-stranded DNA binding"/>
    <property type="evidence" value="ECO:0000314"/>
    <property type="project" value="ARUK-UCL"/>
</dbReference>
<dbReference type="GO" id="GO:0048645">
    <property type="term" value="P:animal organ formation"/>
    <property type="evidence" value="ECO:0007669"/>
    <property type="project" value="Ensembl"/>
</dbReference>
<dbReference type="GO" id="GO:0030154">
    <property type="term" value="P:cell differentiation"/>
    <property type="evidence" value="ECO:0000318"/>
    <property type="project" value="GO_Central"/>
</dbReference>
<dbReference type="GO" id="GO:0007368">
    <property type="term" value="P:determination of left/right symmetry"/>
    <property type="evidence" value="ECO:0007669"/>
    <property type="project" value="Ensembl"/>
</dbReference>
<dbReference type="GO" id="GO:0048706">
    <property type="term" value="P:embryonic skeletal system development"/>
    <property type="evidence" value="ECO:0007669"/>
    <property type="project" value="Ensembl"/>
</dbReference>
<dbReference type="GO" id="GO:0060576">
    <property type="term" value="P:intestinal epithelial cell development"/>
    <property type="evidence" value="ECO:0007669"/>
    <property type="project" value="Ensembl"/>
</dbReference>
<dbReference type="GO" id="GO:0042474">
    <property type="term" value="P:middle ear morphogenesis"/>
    <property type="evidence" value="ECO:0007669"/>
    <property type="project" value="Ensembl"/>
</dbReference>
<dbReference type="GO" id="GO:0043066">
    <property type="term" value="P:negative regulation of apoptotic process"/>
    <property type="evidence" value="ECO:0007669"/>
    <property type="project" value="Ensembl"/>
</dbReference>
<dbReference type="GO" id="GO:0032331">
    <property type="term" value="P:negative regulation of chondrocyte differentiation"/>
    <property type="evidence" value="ECO:0000250"/>
    <property type="project" value="UniProtKB"/>
</dbReference>
<dbReference type="GO" id="GO:0031016">
    <property type="term" value="P:pancreas development"/>
    <property type="evidence" value="ECO:0007669"/>
    <property type="project" value="Ensembl"/>
</dbReference>
<dbReference type="GO" id="GO:0006357">
    <property type="term" value="P:regulation of transcription by RNA polymerase II"/>
    <property type="evidence" value="ECO:0000318"/>
    <property type="project" value="GO_Central"/>
</dbReference>
<dbReference type="GO" id="GO:0001501">
    <property type="term" value="P:skeletal system development"/>
    <property type="evidence" value="ECO:0000304"/>
    <property type="project" value="ProtInc"/>
</dbReference>
<dbReference type="GO" id="GO:0048705">
    <property type="term" value="P:skeletal system morphogenesis"/>
    <property type="evidence" value="ECO:0007669"/>
    <property type="project" value="Ensembl"/>
</dbReference>
<dbReference type="GO" id="GO:0048536">
    <property type="term" value="P:spleen development"/>
    <property type="evidence" value="ECO:0007669"/>
    <property type="project" value="Ensembl"/>
</dbReference>
<dbReference type="GO" id="GO:0006366">
    <property type="term" value="P:transcription by RNA polymerase II"/>
    <property type="evidence" value="ECO:0000304"/>
    <property type="project" value="ProtInc"/>
</dbReference>
<dbReference type="CDD" id="cd00086">
    <property type="entry name" value="homeodomain"/>
    <property type="match status" value="1"/>
</dbReference>
<dbReference type="FunFam" id="1.10.10.60:FF:000225">
    <property type="entry name" value="NK3 homeobox 2"/>
    <property type="match status" value="1"/>
</dbReference>
<dbReference type="Gene3D" id="1.10.10.60">
    <property type="entry name" value="Homeodomain-like"/>
    <property type="match status" value="1"/>
</dbReference>
<dbReference type="InterPro" id="IPR001356">
    <property type="entry name" value="HD"/>
</dbReference>
<dbReference type="InterPro" id="IPR020479">
    <property type="entry name" value="HD_metazoa"/>
</dbReference>
<dbReference type="InterPro" id="IPR017970">
    <property type="entry name" value="Homeobox_CS"/>
</dbReference>
<dbReference type="InterPro" id="IPR050394">
    <property type="entry name" value="Homeobox_NK-like"/>
</dbReference>
<dbReference type="InterPro" id="IPR009057">
    <property type="entry name" value="Homeodomain-like_sf"/>
</dbReference>
<dbReference type="PANTHER" id="PTHR24340">
    <property type="entry name" value="HOMEOBOX PROTEIN NKX"/>
    <property type="match status" value="1"/>
</dbReference>
<dbReference type="PANTHER" id="PTHR24340:SF34">
    <property type="entry name" value="HOMEOBOX PROTEIN NKX-3.2"/>
    <property type="match status" value="1"/>
</dbReference>
<dbReference type="Pfam" id="PF00046">
    <property type="entry name" value="Homeodomain"/>
    <property type="match status" value="1"/>
</dbReference>
<dbReference type="PRINTS" id="PR00024">
    <property type="entry name" value="HOMEOBOX"/>
</dbReference>
<dbReference type="SMART" id="SM00389">
    <property type="entry name" value="HOX"/>
    <property type="match status" value="1"/>
</dbReference>
<dbReference type="SUPFAM" id="SSF46689">
    <property type="entry name" value="Homeodomain-like"/>
    <property type="match status" value="1"/>
</dbReference>
<dbReference type="PROSITE" id="PS00027">
    <property type="entry name" value="HOMEOBOX_1"/>
    <property type="match status" value="1"/>
</dbReference>
<dbReference type="PROSITE" id="PS50071">
    <property type="entry name" value="HOMEOBOX_2"/>
    <property type="match status" value="1"/>
</dbReference>
<evidence type="ECO:0000250" key="1"/>
<evidence type="ECO:0000255" key="2">
    <source>
        <dbReference type="PROSITE-ProRule" id="PRU00108"/>
    </source>
</evidence>
<evidence type="ECO:0000256" key="3">
    <source>
        <dbReference type="SAM" id="MobiDB-lite"/>
    </source>
</evidence>
<evidence type="ECO:0000269" key="4">
    <source>
    </source>
</evidence>
<evidence type="ECO:0000305" key="5"/>
<organism>
    <name type="scientific">Homo sapiens</name>
    <name type="common">Human</name>
    <dbReference type="NCBI Taxonomy" id="9606"/>
    <lineage>
        <taxon>Eukaryota</taxon>
        <taxon>Metazoa</taxon>
        <taxon>Chordata</taxon>
        <taxon>Craniata</taxon>
        <taxon>Vertebrata</taxon>
        <taxon>Euteleostomi</taxon>
        <taxon>Mammalia</taxon>
        <taxon>Eutheria</taxon>
        <taxon>Euarchontoglires</taxon>
        <taxon>Primates</taxon>
        <taxon>Haplorrhini</taxon>
        <taxon>Catarrhini</taxon>
        <taxon>Hominidae</taxon>
        <taxon>Homo</taxon>
    </lineage>
</organism>
<feature type="chain" id="PRO_0000048947" description="Homeobox protein Nkx-3.2">
    <location>
        <begin position="1"/>
        <end position="333"/>
    </location>
</feature>
<feature type="DNA-binding region" description="Homeobox" evidence="2">
    <location>
        <begin position="206"/>
        <end position="265"/>
    </location>
</feature>
<feature type="region of interest" description="Disordered" evidence="3">
    <location>
        <begin position="65"/>
        <end position="113"/>
    </location>
</feature>
<feature type="region of interest" description="Disordered" evidence="3">
    <location>
        <begin position="138"/>
        <end position="212"/>
    </location>
</feature>
<feature type="compositionally biased region" description="Low complexity" evidence="3">
    <location>
        <begin position="75"/>
        <end position="85"/>
    </location>
</feature>
<feature type="compositionally biased region" description="Acidic residues" evidence="3">
    <location>
        <begin position="89"/>
        <end position="100"/>
    </location>
</feature>
<feature type="compositionally biased region" description="Basic and acidic residues" evidence="3">
    <location>
        <begin position="138"/>
        <end position="148"/>
    </location>
</feature>
<feature type="compositionally biased region" description="Gly residues" evidence="3">
    <location>
        <begin position="180"/>
        <end position="189"/>
    </location>
</feature>
<comment type="function">
    <text evidence="1">Transcriptional repressor that acts as a negative regulator of chondrocyte maturation. PLays a role in distal stomach development; required for proper antral-pyloric morphogenesis and development of antral-type epithelium. In concert with GSC, defines the structural components of the middle ear; required for tympanic ring and gonium development and in the regulation of the width of the malleus (By similarity).</text>
</comment>
<comment type="interaction">
    <interactant intactId="EBI-12077522">
        <id>P78367</id>
    </interactant>
    <interactant intactId="EBI-12029004">
        <id>P78424</id>
        <label>POU6F2</label>
    </interactant>
    <organismsDiffer>false</organismsDiffer>
    <experiments>3</experiments>
</comment>
<comment type="subcellular location">
    <subcellularLocation>
        <location evidence="5">Nucleus</location>
    </subcellularLocation>
</comment>
<comment type="tissue specificity">
    <text evidence="4">Expressed at highest levels in cartilage, bone (osteosarcoma) and gut (small intestine and colon), whereas moderate expression is seen in trachea and brain. Expressed in visceral mesoderm and embryonic skeleton.</text>
</comment>
<comment type="disease" evidence="4">
    <disease id="DI-02858">
        <name>Spondylo-megaepiphyseal-metaphyseal dysplasia</name>
        <acronym>SMMD</acronym>
        <description>A skeletal dysplasia characterized by disproportionate short stature with a short and stiff neck and trunk, relatively long limbs that may show flexion contractures of the distal joints, delayed and impaired ossification of the vertebral bodies, the presence of large epiphyseal ossification centers and wide growth plates in the long tubular bones, and numerous pseudoepiphyses of the short tubular bones in hands and feet.</description>
        <dbReference type="MIM" id="613330"/>
    </disease>
    <text>The disease is caused by variants affecting the gene represented in this entry.</text>
</comment>
<comment type="similarity">
    <text evidence="5">Belongs to the NK-3 homeobox family.</text>
</comment>
<reference key="1">
    <citation type="journal article" date="1997" name="Gene">
        <title>Molecular cloning, chromosomal mapping and developmental expression of BAPX1, a novel human homeobox-containing gene homologous to Drosophila bagpipe.</title>
        <authorList>
            <person name="Tribioli C."/>
            <person name="Lufkin T."/>
        </authorList>
    </citation>
    <scope>NUCLEOTIDE SEQUENCE [GENOMIC DNA]</scope>
</reference>
<reference key="2">
    <citation type="journal article" date="1997" name="Genomics">
        <title>Sequence and chromosomal assignment of human BAPX1, a bagpipe-related gene, to 4p16.1: a candidate gene for skeletal dysplasia.</title>
        <authorList>
            <person name="Yoshiura K."/>
            <person name="Murray J.C."/>
        </authorList>
    </citation>
    <scope>NUCLEOTIDE SEQUENCE [GENOMIC DNA / MRNA]</scope>
</reference>
<reference key="3">
    <citation type="journal article" date="2004" name="Genome Res.">
        <title>The status, quality, and expansion of the NIH full-length cDNA project: the Mammalian Gene Collection (MGC).</title>
        <authorList>
            <consortium name="The MGC Project Team"/>
        </authorList>
    </citation>
    <scope>NUCLEOTIDE SEQUENCE [LARGE SCALE MRNA]</scope>
</reference>
<reference key="4">
    <citation type="journal article" date="1997" name="Mech. Dev.">
        <title>Bapx1: an evolutionary conserved homologue of the Drosophila bagpipe homeobox gene is expressed in splanchnic mesoderm and the embryonic skeleton.</title>
        <authorList>
            <person name="Tribioli C."/>
            <person name="Frasch M."/>
            <person name="Lufkin T."/>
        </authorList>
    </citation>
    <scope>NUCLEOTIDE SEQUENCE [GENOMIC DNA] OF 206-265</scope>
</reference>
<reference key="5">
    <citation type="journal article" date="2009" name="Am. J. Hum. Genet.">
        <title>Homozygous inactivating mutations in the NKX3-2 gene result in spondylo-megaepiphyseal-metaphyseal dysplasia.</title>
        <authorList>
            <person name="Hellemans J."/>
            <person name="Simon M."/>
            <person name="Dheedene A."/>
            <person name="Alanay Y."/>
            <person name="Mihci E."/>
            <person name="Rifai L."/>
            <person name="Sefiani A."/>
            <person name="van Bever Y."/>
            <person name="Meradji M."/>
            <person name="Superti-Furga A."/>
            <person name="Mortier G."/>
        </authorList>
    </citation>
    <scope>INVOLVEMENT IN SMMD</scope>
    <scope>TISSUE SPECIFICITY</scope>
</reference>
<name>NKX32_HUMAN</name>
<protein>
    <recommendedName>
        <fullName>Homeobox protein Nkx-3.2</fullName>
    </recommendedName>
    <alternativeName>
        <fullName>Bagpipe homeobox protein homolog 1</fullName>
    </alternativeName>
    <alternativeName>
        <fullName>Homeobox protein NK-3 homolog B</fullName>
    </alternativeName>
</protein>